<dbReference type="EMBL" id="CP000038">
    <property type="protein sequence ID" value="AAZ90034.1"/>
    <property type="molecule type" value="Genomic_DNA"/>
</dbReference>
<dbReference type="RefSeq" id="WP_000820714.1">
    <property type="nucleotide sequence ID" value="NC_007384.1"/>
</dbReference>
<dbReference type="SMR" id="Q3YWS8"/>
<dbReference type="GeneID" id="93778654"/>
<dbReference type="KEGG" id="ssn:SSON_3474"/>
<dbReference type="HOGENOM" id="CLU_155943_1_0_6"/>
<dbReference type="Proteomes" id="UP000002529">
    <property type="component" value="Chromosome"/>
</dbReference>
<dbReference type="GO" id="GO:0005737">
    <property type="term" value="C:cytoplasm"/>
    <property type="evidence" value="ECO:0007669"/>
    <property type="project" value="UniProtKB-SubCell"/>
</dbReference>
<dbReference type="GO" id="GO:0008033">
    <property type="term" value="P:tRNA processing"/>
    <property type="evidence" value="ECO:0007669"/>
    <property type="project" value="UniProtKB-UniRule"/>
</dbReference>
<dbReference type="FunFam" id="3.40.1260.10:FF:000004">
    <property type="entry name" value="Sulfurtransferase TusC"/>
    <property type="match status" value="1"/>
</dbReference>
<dbReference type="Gene3D" id="3.40.1260.10">
    <property type="entry name" value="DsrEFH-like"/>
    <property type="match status" value="1"/>
</dbReference>
<dbReference type="HAMAP" id="MF_00389">
    <property type="entry name" value="Thiourid_synth_C"/>
    <property type="match status" value="1"/>
</dbReference>
<dbReference type="InterPro" id="IPR027396">
    <property type="entry name" value="DsrEFH-like"/>
</dbReference>
<dbReference type="InterPro" id="IPR003787">
    <property type="entry name" value="Sulphur_relay_DsrE/F-like"/>
</dbReference>
<dbReference type="InterPro" id="IPR037450">
    <property type="entry name" value="Sulphur_relay_TusC"/>
</dbReference>
<dbReference type="InterPro" id="IPR017462">
    <property type="entry name" value="Sulphur_relay_TusC/DsrF"/>
</dbReference>
<dbReference type="NCBIfam" id="NF001238">
    <property type="entry name" value="PRK00211.1"/>
    <property type="match status" value="1"/>
</dbReference>
<dbReference type="NCBIfam" id="TIGR03010">
    <property type="entry name" value="sulf_tusC_dsrF"/>
    <property type="match status" value="1"/>
</dbReference>
<dbReference type="PANTHER" id="PTHR38780">
    <property type="entry name" value="PROTEIN TUSC"/>
    <property type="match status" value="1"/>
</dbReference>
<dbReference type="PANTHER" id="PTHR38780:SF1">
    <property type="entry name" value="PROTEIN TUSC"/>
    <property type="match status" value="1"/>
</dbReference>
<dbReference type="Pfam" id="PF02635">
    <property type="entry name" value="DsrE"/>
    <property type="match status" value="1"/>
</dbReference>
<dbReference type="SUPFAM" id="SSF75169">
    <property type="entry name" value="DsrEFH-like"/>
    <property type="match status" value="1"/>
</dbReference>
<proteinExistence type="inferred from homology"/>
<keyword id="KW-0963">Cytoplasm</keyword>
<keyword id="KW-1185">Reference proteome</keyword>
<keyword id="KW-0819">tRNA processing</keyword>
<comment type="function">
    <text evidence="1">Part of a sulfur-relay system required for 2-thiolation of 5-methylaminomethyl-2-thiouridine (mnm(5)s(2)U) at tRNA wobble positions.</text>
</comment>
<comment type="subunit">
    <text evidence="1">Heterohexamer, formed by a dimer of trimers. The hexameric TusBCD complex contains 2 copies each of TusB, TusC and TusD. The TusBCD complex interacts with TusE.</text>
</comment>
<comment type="subcellular location">
    <subcellularLocation>
        <location evidence="1">Cytoplasm</location>
    </subcellularLocation>
</comment>
<comment type="similarity">
    <text evidence="1">Belongs to the DsrF/TusC family.</text>
</comment>
<gene>
    <name evidence="1" type="primary">tusC</name>
    <name type="ordered locus">SSON_3474</name>
</gene>
<evidence type="ECO:0000255" key="1">
    <source>
        <dbReference type="HAMAP-Rule" id="MF_00389"/>
    </source>
</evidence>
<feature type="chain" id="PRO_0000234459" description="Protein TusC">
    <location>
        <begin position="1"/>
        <end position="119"/>
    </location>
</feature>
<sequence>MKRIAFVFSTAPHGTAAGREGLDALLATSALTDDLAVFFIADGVFQLLPGQKPDAVLARDYIATFKLLGLYDIEQCWVCAASLRERGLDPQTPFVVEATPLEADALRRELANYDVILRF</sequence>
<protein>
    <recommendedName>
        <fullName evidence="1">Protein TusC</fullName>
    </recommendedName>
    <alternativeName>
        <fullName evidence="1">tRNA 2-thiouridine synthesizing protein C</fullName>
    </alternativeName>
</protein>
<accession>Q3YWS8</accession>
<name>TUSC_SHISS</name>
<reference key="1">
    <citation type="journal article" date="2005" name="Nucleic Acids Res.">
        <title>Genome dynamics and diversity of Shigella species, the etiologic agents of bacillary dysentery.</title>
        <authorList>
            <person name="Yang F."/>
            <person name="Yang J."/>
            <person name="Zhang X."/>
            <person name="Chen L."/>
            <person name="Jiang Y."/>
            <person name="Yan Y."/>
            <person name="Tang X."/>
            <person name="Wang J."/>
            <person name="Xiong Z."/>
            <person name="Dong J."/>
            <person name="Xue Y."/>
            <person name="Zhu Y."/>
            <person name="Xu X."/>
            <person name="Sun L."/>
            <person name="Chen S."/>
            <person name="Nie H."/>
            <person name="Peng J."/>
            <person name="Xu J."/>
            <person name="Wang Y."/>
            <person name="Yuan Z."/>
            <person name="Wen Y."/>
            <person name="Yao Z."/>
            <person name="Shen Y."/>
            <person name="Qiang B."/>
            <person name="Hou Y."/>
            <person name="Yu J."/>
            <person name="Jin Q."/>
        </authorList>
    </citation>
    <scope>NUCLEOTIDE SEQUENCE [LARGE SCALE GENOMIC DNA]</scope>
    <source>
        <strain>Ss046</strain>
    </source>
</reference>
<organism>
    <name type="scientific">Shigella sonnei (strain Ss046)</name>
    <dbReference type="NCBI Taxonomy" id="300269"/>
    <lineage>
        <taxon>Bacteria</taxon>
        <taxon>Pseudomonadati</taxon>
        <taxon>Pseudomonadota</taxon>
        <taxon>Gammaproteobacteria</taxon>
        <taxon>Enterobacterales</taxon>
        <taxon>Enterobacteriaceae</taxon>
        <taxon>Shigella</taxon>
    </lineage>
</organism>